<accession>Q2P3E8</accession>
<protein>
    <recommendedName>
        <fullName evidence="1">Tetraacyldisaccharide 4'-kinase</fullName>
        <ecNumber evidence="1">2.7.1.130</ecNumber>
    </recommendedName>
    <alternativeName>
        <fullName evidence="1">Lipid A 4'-kinase</fullName>
    </alternativeName>
</protein>
<keyword id="KW-0067">ATP-binding</keyword>
<keyword id="KW-0418">Kinase</keyword>
<keyword id="KW-0441">Lipid A biosynthesis</keyword>
<keyword id="KW-0444">Lipid biosynthesis</keyword>
<keyword id="KW-0443">Lipid metabolism</keyword>
<keyword id="KW-0547">Nucleotide-binding</keyword>
<keyword id="KW-0808">Transferase</keyword>
<feature type="chain" id="PRO_0000229990" description="Tetraacyldisaccharide 4'-kinase">
    <location>
        <begin position="1"/>
        <end position="346"/>
    </location>
</feature>
<feature type="binding site" evidence="1">
    <location>
        <begin position="62"/>
        <end position="69"/>
    </location>
    <ligand>
        <name>ATP</name>
        <dbReference type="ChEBI" id="CHEBI:30616"/>
    </ligand>
</feature>
<gene>
    <name evidence="1" type="primary">lpxK</name>
    <name type="ordered locus">XOO2174</name>
</gene>
<sequence>MSKRGARTPGFWYDNNTPIPLPARILVPVYGAAIALRRALYRRGWRKRHGVPVPVIVVGNVTAGGTGKTPLTIALVAKLQEAGWTPGVASRGYGRDEAGKARWVEADTPVALGGDEPVLIAWKTGARVRVDSDRLAAARALVEAGCDIVICDDGLQHYRLARDVEIEVVDGQRRYGNGRLLPAGPLREPVARARDCDFRVVNLGQASTTAAPQAPDDAGFGEWQMRLSIDSVQPMDGKRAQPLSMLAGQRVHAVAGIAYPERFFAMLRARGIGVVPHAFPDHHVYRAADFSFGSRLPVLMTEKDAVKCRPFADEWLYSVPLKAELPAAFWVSLLDRLNKLASRQGV</sequence>
<comment type="function">
    <text evidence="1">Transfers the gamma-phosphate of ATP to the 4'-position of a tetraacyldisaccharide 1-phosphate intermediate (termed DS-1-P) to form tetraacyldisaccharide 1,4'-bis-phosphate (lipid IVA).</text>
</comment>
<comment type="catalytic activity">
    <reaction evidence="1">
        <text>a lipid A disaccharide + ATP = a lipid IVA + ADP + H(+)</text>
        <dbReference type="Rhea" id="RHEA:67840"/>
        <dbReference type="ChEBI" id="CHEBI:15378"/>
        <dbReference type="ChEBI" id="CHEBI:30616"/>
        <dbReference type="ChEBI" id="CHEBI:176343"/>
        <dbReference type="ChEBI" id="CHEBI:176425"/>
        <dbReference type="ChEBI" id="CHEBI:456216"/>
        <dbReference type="EC" id="2.7.1.130"/>
    </reaction>
</comment>
<comment type="pathway">
    <text evidence="1">Glycolipid biosynthesis; lipid IV(A) biosynthesis; lipid IV(A) from (3R)-3-hydroxytetradecanoyl-[acyl-carrier-protein] and UDP-N-acetyl-alpha-D-glucosamine: step 6/6.</text>
</comment>
<comment type="similarity">
    <text evidence="1">Belongs to the LpxK family.</text>
</comment>
<evidence type="ECO:0000255" key="1">
    <source>
        <dbReference type="HAMAP-Rule" id="MF_00409"/>
    </source>
</evidence>
<dbReference type="EC" id="2.7.1.130" evidence="1"/>
<dbReference type="EMBL" id="AP008229">
    <property type="protein sequence ID" value="BAE68929.1"/>
    <property type="molecule type" value="Genomic_DNA"/>
</dbReference>
<dbReference type="RefSeq" id="WP_011258973.1">
    <property type="nucleotide sequence ID" value="NC_007705.1"/>
</dbReference>
<dbReference type="SMR" id="Q2P3E8"/>
<dbReference type="KEGG" id="xom:XOO2174"/>
<dbReference type="HOGENOM" id="CLU_038816_2_0_6"/>
<dbReference type="UniPathway" id="UPA00359">
    <property type="reaction ID" value="UER00482"/>
</dbReference>
<dbReference type="GO" id="GO:0005886">
    <property type="term" value="C:plasma membrane"/>
    <property type="evidence" value="ECO:0007669"/>
    <property type="project" value="TreeGrafter"/>
</dbReference>
<dbReference type="GO" id="GO:0005524">
    <property type="term" value="F:ATP binding"/>
    <property type="evidence" value="ECO:0007669"/>
    <property type="project" value="UniProtKB-UniRule"/>
</dbReference>
<dbReference type="GO" id="GO:0009029">
    <property type="term" value="F:tetraacyldisaccharide 4'-kinase activity"/>
    <property type="evidence" value="ECO:0007669"/>
    <property type="project" value="UniProtKB-UniRule"/>
</dbReference>
<dbReference type="GO" id="GO:0009245">
    <property type="term" value="P:lipid A biosynthetic process"/>
    <property type="evidence" value="ECO:0007669"/>
    <property type="project" value="UniProtKB-UniRule"/>
</dbReference>
<dbReference type="GO" id="GO:0009244">
    <property type="term" value="P:lipopolysaccharide core region biosynthetic process"/>
    <property type="evidence" value="ECO:0007669"/>
    <property type="project" value="TreeGrafter"/>
</dbReference>
<dbReference type="HAMAP" id="MF_00409">
    <property type="entry name" value="LpxK"/>
    <property type="match status" value="1"/>
</dbReference>
<dbReference type="InterPro" id="IPR003758">
    <property type="entry name" value="LpxK"/>
</dbReference>
<dbReference type="InterPro" id="IPR027417">
    <property type="entry name" value="P-loop_NTPase"/>
</dbReference>
<dbReference type="NCBIfam" id="TIGR00682">
    <property type="entry name" value="lpxK"/>
    <property type="match status" value="1"/>
</dbReference>
<dbReference type="PANTHER" id="PTHR42724">
    <property type="entry name" value="TETRAACYLDISACCHARIDE 4'-KINASE"/>
    <property type="match status" value="1"/>
</dbReference>
<dbReference type="PANTHER" id="PTHR42724:SF1">
    <property type="entry name" value="TETRAACYLDISACCHARIDE 4'-KINASE, MITOCHONDRIAL-RELATED"/>
    <property type="match status" value="1"/>
</dbReference>
<dbReference type="Pfam" id="PF02606">
    <property type="entry name" value="LpxK"/>
    <property type="match status" value="1"/>
</dbReference>
<dbReference type="SUPFAM" id="SSF52540">
    <property type="entry name" value="P-loop containing nucleoside triphosphate hydrolases"/>
    <property type="match status" value="1"/>
</dbReference>
<proteinExistence type="inferred from homology"/>
<reference key="1">
    <citation type="journal article" date="2005" name="Jpn. Agric. Res. Q.">
        <title>Genome sequence of Xanthomonas oryzae pv. oryzae suggests contribution of large numbers of effector genes and insertion sequences to its race diversity.</title>
        <authorList>
            <person name="Ochiai H."/>
            <person name="Inoue Y."/>
            <person name="Takeya M."/>
            <person name="Sasaki A."/>
            <person name="Kaku H."/>
        </authorList>
    </citation>
    <scope>NUCLEOTIDE SEQUENCE [LARGE SCALE GENOMIC DNA]</scope>
    <source>
        <strain>MAFF 311018</strain>
    </source>
</reference>
<name>LPXK_XANOM</name>
<organism>
    <name type="scientific">Xanthomonas oryzae pv. oryzae (strain MAFF 311018)</name>
    <dbReference type="NCBI Taxonomy" id="342109"/>
    <lineage>
        <taxon>Bacteria</taxon>
        <taxon>Pseudomonadati</taxon>
        <taxon>Pseudomonadota</taxon>
        <taxon>Gammaproteobacteria</taxon>
        <taxon>Lysobacterales</taxon>
        <taxon>Lysobacteraceae</taxon>
        <taxon>Xanthomonas</taxon>
    </lineage>
</organism>